<feature type="chain" id="PRO_0000423555" description="Non-reducing end beta-L-arabinofuranosidase">
    <location>
        <begin position="1"/>
        <end position="658"/>
    </location>
</feature>
<feature type="active site" description="Proton donor/acceptor" evidence="9 10">
    <location>
        <position position="322"/>
    </location>
</feature>
<feature type="active site" description="Nucleophile; S-glycosyl-cysteine intermediate" evidence="9 10">
    <location>
        <position position="417"/>
    </location>
</feature>
<feature type="binding site" evidence="2 3 12 15">
    <location>
        <position position="142"/>
    </location>
    <ligand>
        <name>beta-L-arabinofuranose</name>
        <dbReference type="ChEBI" id="CHEBI:28272"/>
    </ligand>
</feature>
<feature type="binding site" evidence="2 3 12 15">
    <location>
        <begin position="192"/>
        <end position="194"/>
    </location>
    <ligand>
        <name>beta-L-arabinofuranose</name>
        <dbReference type="ChEBI" id="CHEBI:28272"/>
    </ligand>
</feature>
<feature type="binding site" evidence="2 3 12 15">
    <location>
        <position position="270"/>
    </location>
    <ligand>
        <name>beta-L-arabinofuranose</name>
        <dbReference type="ChEBI" id="CHEBI:28272"/>
    </ligand>
</feature>
<feature type="binding site" evidence="2 3 12 15">
    <location>
        <position position="322"/>
    </location>
    <ligand>
        <name>beta-L-arabinofuranose</name>
        <dbReference type="ChEBI" id="CHEBI:28272"/>
    </ligand>
</feature>
<feature type="binding site" evidence="2 3 12 13 15">
    <location>
        <position position="338"/>
    </location>
    <ligand>
        <name>Zn(2+)</name>
        <dbReference type="ChEBI" id="CHEBI:29105"/>
    </ligand>
</feature>
<feature type="binding site" evidence="2 3 12 13 15">
    <location>
        <position position="340"/>
    </location>
    <ligand>
        <name>Zn(2+)</name>
        <dbReference type="ChEBI" id="CHEBI:29105"/>
    </ligand>
</feature>
<feature type="binding site" evidence="2 3 12 13 15">
    <location>
        <position position="417"/>
    </location>
    <ligand>
        <name>Zn(2+)</name>
        <dbReference type="ChEBI" id="CHEBI:29105"/>
    </ligand>
</feature>
<feature type="binding site" evidence="2 3 12 13 15">
    <location>
        <position position="418"/>
    </location>
    <ligand>
        <name>Zn(2+)</name>
        <dbReference type="ChEBI" id="CHEBI:29105"/>
    </ligand>
</feature>
<feature type="mutagenesis site" description="Almost abolishes enzyme activity." evidence="1 2">
    <original>E</original>
    <variation>A</variation>
    <location>
        <position position="322"/>
    </location>
</feature>
<feature type="mutagenesis site" description="Shows very weak activity." evidence="2">
    <original>E</original>
    <variation>Q</variation>
    <location>
        <position position="322"/>
    </location>
</feature>
<feature type="mutagenesis site" description="Decreases Zn(2+) content. Shows very weak activity." evidence="2">
    <original>E</original>
    <variation>A</variation>
    <variation>Q</variation>
    <location>
        <position position="338"/>
    </location>
</feature>
<feature type="mutagenesis site" description="Abolishes enzyme activity." evidence="1">
    <original>E</original>
    <variation>A</variation>
    <location>
        <position position="338"/>
    </location>
</feature>
<feature type="mutagenesis site" description="Decreases Zn(2+) content. Shows very weak activity." evidence="2">
    <original>C</original>
    <variation>A</variation>
    <variation>S</variation>
    <location>
        <position position="340"/>
    </location>
</feature>
<feature type="mutagenesis site" description="Insoluble protein with remaining enzyme activity." evidence="1">
    <original>E</original>
    <variation>A</variation>
    <location>
        <position position="366"/>
    </location>
</feature>
<feature type="mutagenesis site" description="Retains weak activity." evidence="2">
    <original>C</original>
    <variation>A</variation>
    <variation>S</variation>
    <location>
        <position position="415"/>
    </location>
</feature>
<feature type="mutagenesis site" description="Decreases Zn(2+) content. Lack of activity." evidence="2">
    <original>C</original>
    <variation>A</variation>
    <variation>S</variation>
    <location>
        <position position="417"/>
    </location>
</feature>
<feature type="mutagenesis site" description="Decreases Zn(2+) content. Shows very weak activity." evidence="2">
    <original>C</original>
    <variation>A</variation>
    <variation>S</variation>
    <location>
        <position position="418"/>
    </location>
</feature>
<feature type="strand" evidence="19">
    <location>
        <begin position="2"/>
        <end position="5"/>
    </location>
</feature>
<feature type="helix" evidence="19">
    <location>
        <begin position="8"/>
        <end position="19"/>
    </location>
</feature>
<feature type="helix" evidence="19">
    <location>
        <begin position="21"/>
        <end position="29"/>
    </location>
</feature>
<feature type="turn" evidence="18">
    <location>
        <begin position="30"/>
        <end position="32"/>
    </location>
</feature>
<feature type="strand" evidence="18">
    <location>
        <begin position="41"/>
        <end position="45"/>
    </location>
</feature>
<feature type="helix" evidence="19">
    <location>
        <begin position="53"/>
        <end position="60"/>
    </location>
</feature>
<feature type="turn" evidence="19">
    <location>
        <begin position="72"/>
        <end position="74"/>
    </location>
</feature>
<feature type="helix" evidence="19">
    <location>
        <begin position="75"/>
        <end position="91"/>
    </location>
</feature>
<feature type="helix" evidence="19">
    <location>
        <begin position="95"/>
        <end position="111"/>
    </location>
</feature>
<feature type="helix" evidence="19">
    <location>
        <begin position="121"/>
        <end position="124"/>
    </location>
</feature>
<feature type="helix" evidence="19">
    <location>
        <begin position="127"/>
        <end position="131"/>
    </location>
</feature>
<feature type="helix" evidence="19">
    <location>
        <begin position="138"/>
        <end position="141"/>
    </location>
</feature>
<feature type="helix" evidence="19">
    <location>
        <begin position="143"/>
        <end position="161"/>
    </location>
</feature>
<feature type="helix" evidence="19">
    <location>
        <begin position="164"/>
        <end position="180"/>
    </location>
</feature>
<feature type="strand" evidence="19">
    <location>
        <begin position="181"/>
        <end position="184"/>
    </location>
</feature>
<feature type="helix" evidence="19">
    <location>
        <begin position="197"/>
        <end position="208"/>
    </location>
</feature>
<feature type="helix" evidence="19">
    <location>
        <begin position="211"/>
        <end position="223"/>
    </location>
</feature>
<feature type="turn" evidence="20">
    <location>
        <begin position="224"/>
        <end position="226"/>
    </location>
</feature>
<feature type="helix" evidence="19">
    <location>
        <begin position="230"/>
        <end position="237"/>
    </location>
</feature>
<feature type="turn" evidence="19">
    <location>
        <begin position="238"/>
        <end position="240"/>
    </location>
</feature>
<feature type="turn" evidence="19">
    <location>
        <begin position="252"/>
        <end position="255"/>
    </location>
</feature>
<feature type="helix" evidence="19">
    <location>
        <begin position="261"/>
        <end position="263"/>
    </location>
</feature>
<feature type="helix" evidence="19">
    <location>
        <begin position="271"/>
        <end position="288"/>
    </location>
</feature>
<feature type="helix" evidence="19">
    <location>
        <begin position="291"/>
        <end position="307"/>
    </location>
</feature>
<feature type="helix" evidence="19">
    <location>
        <begin position="320"/>
        <end position="322"/>
    </location>
</feature>
<feature type="strand" evidence="19">
    <location>
        <begin position="332"/>
        <end position="334"/>
    </location>
</feature>
<feature type="helix" evidence="19">
    <location>
        <begin position="339"/>
        <end position="355"/>
    </location>
</feature>
<feature type="helix" evidence="19">
    <location>
        <begin position="359"/>
        <end position="370"/>
    </location>
</feature>
<feature type="turn" evidence="19">
    <location>
        <begin position="371"/>
        <end position="373"/>
    </location>
</feature>
<feature type="helix" evidence="19">
    <location>
        <begin position="374"/>
        <end position="376"/>
    </location>
</feature>
<feature type="strand" evidence="19">
    <location>
        <begin position="390"/>
        <end position="392"/>
    </location>
</feature>
<feature type="helix" evidence="19">
    <location>
        <begin position="394"/>
        <end position="398"/>
    </location>
</feature>
<feature type="turn" evidence="19">
    <location>
        <begin position="400"/>
        <end position="404"/>
    </location>
</feature>
<feature type="turn" evidence="16">
    <location>
        <begin position="414"/>
        <end position="416"/>
    </location>
</feature>
<feature type="helix" evidence="19">
    <location>
        <begin position="419"/>
        <end position="427"/>
    </location>
</feature>
<feature type="helix" evidence="19">
    <location>
        <begin position="429"/>
        <end position="432"/>
    </location>
</feature>
<feature type="strand" evidence="19">
    <location>
        <begin position="433"/>
        <end position="437"/>
    </location>
</feature>
<feature type="helix" evidence="19">
    <location>
        <begin position="438"/>
        <end position="440"/>
    </location>
</feature>
<feature type="strand" evidence="19">
    <location>
        <begin position="442"/>
        <end position="445"/>
    </location>
</feature>
<feature type="strand" evidence="19">
    <location>
        <begin position="451"/>
        <end position="454"/>
    </location>
</feature>
<feature type="strand" evidence="19">
    <location>
        <begin position="460"/>
        <end position="464"/>
    </location>
</feature>
<feature type="turn" evidence="19">
    <location>
        <begin position="467"/>
        <end position="469"/>
    </location>
</feature>
<feature type="strand" evidence="19">
    <location>
        <begin position="472"/>
        <end position="478"/>
    </location>
</feature>
<feature type="strand" evidence="19">
    <location>
        <begin position="484"/>
        <end position="493"/>
    </location>
</feature>
<feature type="helix" evidence="19">
    <location>
        <begin position="496"/>
        <end position="498"/>
    </location>
</feature>
<feature type="strand" evidence="19">
    <location>
        <begin position="503"/>
        <end position="506"/>
    </location>
</feature>
<feature type="strand" evidence="19">
    <location>
        <begin position="519"/>
        <end position="525"/>
    </location>
</feature>
<feature type="strand" evidence="19">
    <location>
        <begin position="529"/>
        <end position="535"/>
    </location>
</feature>
<feature type="strand" evidence="19">
    <location>
        <begin position="540"/>
        <end position="543"/>
    </location>
</feature>
<feature type="helix" evidence="19">
    <location>
        <begin position="550"/>
        <end position="552"/>
    </location>
</feature>
<feature type="strand" evidence="19">
    <location>
        <begin position="555"/>
        <end position="560"/>
    </location>
</feature>
<feature type="strand" evidence="19">
    <location>
        <begin position="563"/>
        <end position="568"/>
    </location>
</feature>
<feature type="turn" evidence="19">
    <location>
        <begin position="569"/>
        <end position="571"/>
    </location>
</feature>
<feature type="strand" evidence="17">
    <location>
        <begin position="572"/>
        <end position="574"/>
    </location>
</feature>
<feature type="helix" evidence="19">
    <location>
        <begin position="576"/>
        <end position="578"/>
    </location>
</feature>
<feature type="strand" evidence="19">
    <location>
        <begin position="579"/>
        <end position="581"/>
    </location>
</feature>
<feature type="helix" evidence="19">
    <location>
        <begin position="587"/>
        <end position="589"/>
    </location>
</feature>
<feature type="strand" evidence="19">
    <location>
        <begin position="591"/>
        <end position="595"/>
    </location>
</feature>
<feature type="strand" evidence="19">
    <location>
        <begin position="601"/>
        <end position="612"/>
    </location>
</feature>
<feature type="strand" evidence="19">
    <location>
        <begin position="631"/>
        <end position="640"/>
    </location>
</feature>
<feature type="helix" evidence="19">
    <location>
        <begin position="641"/>
        <end position="643"/>
    </location>
</feature>
<feature type="strand" evidence="19">
    <location>
        <begin position="646"/>
        <end position="648"/>
    </location>
</feature>
<feature type="strand" evidence="19">
    <location>
        <begin position="652"/>
        <end position="657"/>
    </location>
</feature>
<gene>
    <name evidence="4" type="primary">hypBA1</name>
    <name type="ordered locus">BLLJ_0211</name>
</gene>
<comment type="function">
    <text evidence="1">Beta-L-arabinofuranosidase that removes the beta-L-arabinofuranose residue from the non-reducing end of various substrates, including beta-L-arabinofuranosyl-hydroxyproline (Ara-Hyp), Ara-beta-1,2-Ara-beta-Hyp (Ara(2)-Hyp), Ara-beta-1,2-Ara-beta-1,2-Ara-beta-Hyp (Ara(3)-Hyp), and beta-L-arabinofuranosyl-(1-&gt;2)-1-O-methyl-beta-L-arabinofuranose. In the presence of 1-alkanols, shows transglycosylation activity, retaining the anomeric configuration of the arabinofuranose residue.</text>
</comment>
<comment type="catalytic activity">
    <reaction evidence="1">
        <text>beta-L-arabinofuranosyl-(1-&gt;2)-beta-L-arabinofuranose + H2O = 2 beta-L-arabinofuranose</text>
        <dbReference type="Rhea" id="RHEA:36051"/>
        <dbReference type="ChEBI" id="CHEBI:15377"/>
        <dbReference type="ChEBI" id="CHEBI:28272"/>
        <dbReference type="ChEBI" id="CHEBI:73180"/>
        <dbReference type="EC" id="3.2.1.185"/>
    </reaction>
</comment>
<comment type="cofactor">
    <cofactor evidence="2 3">
        <name>Zn(2+)</name>
        <dbReference type="ChEBI" id="CHEBI:29105"/>
    </cofactor>
    <text evidence="3">Zn(2+) ion is involved in the catalytic reaction through maintaining the proper configuration of active site.</text>
</comment>
<comment type="activity regulation">
    <text evidence="2">Strongly inhibited in the presence of thiol modifiers, suggesting a crucial role for cysteine residues in catalysis. Slightly inhibited by EDTA.</text>
</comment>
<comment type="biophysicochemical properties">
    <kinetics>
        <KM evidence="1">0.85 mM for L-arabinofuranose-beta-1,2-L-arabinofuranose disaccharide (beta-Ara2)</KM>
        <KM evidence="1">0.43 mM for Ara-Hyp</KM>
        <KM evidence="1">0.31 mM for Ara(2)-Hyp</KM>
        <text evidence="1">kcat is 2.0 sec(-1) with beta-Ara2. kcat is 0.013 sec(-1) with Ara-Hyp. kcat is 6.3 sec(-1) with Ara(2)-Hyp.</text>
    </kinetics>
</comment>
<comment type="subunit">
    <text evidence="2 3">Homodimer in solution.</text>
</comment>
<comment type="similarity">
    <text evidence="6">Belongs to the glycosyl hydrolase 127 family.</text>
</comment>
<comment type="caution">
    <text evidence="7 8">The original article describing the function has been retracted because the results of E338A and E366A mutants were reversed. The authors later submitted a corrected manuscript.</text>
</comment>
<organism>
    <name type="scientific">Bifidobacterium longum subsp. longum (strain ATCC 15707 / DSM 20219 / JCM 1217 / NCTC 11818 / E194b)</name>
    <dbReference type="NCBI Taxonomy" id="565042"/>
    <lineage>
        <taxon>Bacteria</taxon>
        <taxon>Bacillati</taxon>
        <taxon>Actinomycetota</taxon>
        <taxon>Actinomycetes</taxon>
        <taxon>Bifidobacteriales</taxon>
        <taxon>Bifidobacteriaceae</taxon>
        <taxon>Bifidobacterium</taxon>
    </lineage>
</organism>
<name>HYBA1_BIFL2</name>
<dbReference type="EC" id="3.2.1.185" evidence="1"/>
<dbReference type="EMBL" id="AB619598">
    <property type="protein sequence ID" value="BAK79118.1"/>
    <property type="molecule type" value="Genomic_DNA"/>
</dbReference>
<dbReference type="EMBL" id="AP010888">
    <property type="protein sequence ID" value="BAJ65881.1"/>
    <property type="molecule type" value="Genomic_DNA"/>
</dbReference>
<dbReference type="RefSeq" id="WP_013582351.1">
    <property type="nucleotide sequence ID" value="NC_015067.1"/>
</dbReference>
<dbReference type="PDB" id="3WKW">
    <property type="method" value="X-ray"/>
    <property type="resolution" value="2.20 A"/>
    <property type="chains" value="A=1-658"/>
</dbReference>
<dbReference type="PDB" id="3WKX">
    <property type="method" value="X-ray"/>
    <property type="resolution" value="2.00 A"/>
    <property type="chains" value="A=1-658"/>
</dbReference>
<dbReference type="PDB" id="3WRE">
    <property type="method" value="X-ray"/>
    <property type="resolution" value="2.78 A"/>
    <property type="chains" value="A=1-658"/>
</dbReference>
<dbReference type="PDB" id="3WRF">
    <property type="method" value="X-ray"/>
    <property type="resolution" value="2.25 A"/>
    <property type="chains" value="A=1-658"/>
</dbReference>
<dbReference type="PDB" id="3WRG">
    <property type="method" value="X-ray"/>
    <property type="resolution" value="2.23 A"/>
    <property type="chains" value="A=1-658"/>
</dbReference>
<dbReference type="PDB" id="7BZL">
    <property type="method" value="X-ray"/>
    <property type="resolution" value="2.30 A"/>
    <property type="chains" value="A=1-658"/>
</dbReference>
<dbReference type="PDB" id="7DIF">
    <property type="method" value="X-ray"/>
    <property type="resolution" value="1.75 A"/>
    <property type="chains" value="A=1-658"/>
</dbReference>
<dbReference type="PDB" id="7EXU">
    <property type="method" value="X-ray"/>
    <property type="resolution" value="2.30 A"/>
    <property type="chains" value="A=1-658"/>
</dbReference>
<dbReference type="PDB" id="7EXV">
    <property type="method" value="X-ray"/>
    <property type="resolution" value="2.60 A"/>
    <property type="chains" value="A=1-658"/>
</dbReference>
<dbReference type="PDB" id="7EXW">
    <property type="method" value="X-ray"/>
    <property type="resolution" value="2.20 A"/>
    <property type="chains" value="A=1-658"/>
</dbReference>
<dbReference type="PDB" id="8QF2">
    <property type="method" value="X-ray"/>
    <property type="resolution" value="2.35 A"/>
    <property type="chains" value="A=1-658"/>
</dbReference>
<dbReference type="PDBsum" id="3WKW"/>
<dbReference type="PDBsum" id="3WKX"/>
<dbReference type="PDBsum" id="3WRE"/>
<dbReference type="PDBsum" id="3WRF"/>
<dbReference type="PDBsum" id="3WRG"/>
<dbReference type="PDBsum" id="7BZL"/>
<dbReference type="PDBsum" id="7DIF"/>
<dbReference type="PDBsum" id="7EXU"/>
<dbReference type="PDBsum" id="7EXV"/>
<dbReference type="PDBsum" id="7EXW"/>
<dbReference type="PDBsum" id="8QF2"/>
<dbReference type="SMR" id="E8MGH8"/>
<dbReference type="ChEMBL" id="CHEMBL5169216"/>
<dbReference type="CAZy" id="GH127">
    <property type="family name" value="Glycoside Hydrolase Family 127"/>
</dbReference>
<dbReference type="GeneID" id="69577454"/>
<dbReference type="KEGG" id="blm:BLLJ_0211"/>
<dbReference type="HOGENOM" id="CLU_013148_3_1_11"/>
<dbReference type="BRENDA" id="3.2.1.185">
    <property type="organism ID" value="851"/>
</dbReference>
<dbReference type="EvolutionaryTrace" id="E8MGH8"/>
<dbReference type="GO" id="GO:0102478">
    <property type="term" value="F:beta-L-arabinofuranosidase activity"/>
    <property type="evidence" value="ECO:0007669"/>
    <property type="project" value="UniProtKB-EC"/>
</dbReference>
<dbReference type="GO" id="GO:0046872">
    <property type="term" value="F:metal ion binding"/>
    <property type="evidence" value="ECO:0007669"/>
    <property type="project" value="UniProtKB-KW"/>
</dbReference>
<dbReference type="GO" id="GO:0000272">
    <property type="term" value="P:polysaccharide catabolic process"/>
    <property type="evidence" value="ECO:0007669"/>
    <property type="project" value="UniProtKB-KW"/>
</dbReference>
<dbReference type="Gene3D" id="1.50.10.10">
    <property type="match status" value="1"/>
</dbReference>
<dbReference type="InterPro" id="IPR008928">
    <property type="entry name" value="6-hairpin_glycosidase_sf"/>
</dbReference>
<dbReference type="InterPro" id="IPR012341">
    <property type="entry name" value="6hp_glycosidase-like_sf"/>
</dbReference>
<dbReference type="InterPro" id="IPR049174">
    <property type="entry name" value="Beta-AFase-like"/>
</dbReference>
<dbReference type="InterPro" id="IPR049049">
    <property type="entry name" value="Beta-AFase-like_GH127_C"/>
</dbReference>
<dbReference type="InterPro" id="IPR012878">
    <property type="entry name" value="Beta-AFase-like_GH127_cat"/>
</dbReference>
<dbReference type="InterPro" id="IPR049046">
    <property type="entry name" value="Beta-AFase-like_GH127_middle"/>
</dbReference>
<dbReference type="PANTHER" id="PTHR43465">
    <property type="entry name" value="DUF1680 DOMAIN PROTEIN (AFU_ORTHOLOGUE AFUA_1G08910)"/>
    <property type="match status" value="1"/>
</dbReference>
<dbReference type="PANTHER" id="PTHR43465:SF2">
    <property type="entry name" value="DUF1680 DOMAIN PROTEIN (AFU_ORTHOLOGUE AFUA_1G08910)"/>
    <property type="match status" value="1"/>
</dbReference>
<dbReference type="Pfam" id="PF07944">
    <property type="entry name" value="Beta-AFase-like_GH127_cat"/>
    <property type="match status" value="1"/>
</dbReference>
<dbReference type="Pfam" id="PF20737">
    <property type="entry name" value="Glyco_hydro127C"/>
    <property type="match status" value="1"/>
</dbReference>
<dbReference type="Pfam" id="PF20736">
    <property type="entry name" value="Glyco_hydro127M"/>
    <property type="match status" value="1"/>
</dbReference>
<dbReference type="SUPFAM" id="SSF48208">
    <property type="entry name" value="Six-hairpin glycosidases"/>
    <property type="match status" value="1"/>
</dbReference>
<keyword id="KW-0002">3D-structure</keyword>
<keyword id="KW-0119">Carbohydrate metabolism</keyword>
<keyword id="KW-0326">Glycosidase</keyword>
<keyword id="KW-0378">Hydrolase</keyword>
<keyword id="KW-0479">Metal-binding</keyword>
<keyword id="KW-0624">Polysaccharide degradation</keyword>
<keyword id="KW-0862">Zinc</keyword>
<evidence type="ECO:0000269" key="1">
    <source>
    </source>
</evidence>
<evidence type="ECO:0000269" key="2">
    <source>
    </source>
</evidence>
<evidence type="ECO:0000269" key="3">
    <source ref="7"/>
</evidence>
<evidence type="ECO:0000303" key="4">
    <source>
    </source>
</evidence>
<evidence type="ECO:0000303" key="5">
    <source>
    </source>
</evidence>
<evidence type="ECO:0000305" key="6"/>
<evidence type="ECO:0000305" key="7">
    <source>
    </source>
</evidence>
<evidence type="ECO:0000305" key="8">
    <source>
    </source>
</evidence>
<evidence type="ECO:0000305" key="9">
    <source>
    </source>
</evidence>
<evidence type="ECO:0000305" key="10">
    <source ref="7"/>
</evidence>
<evidence type="ECO:0007744" key="11">
    <source>
        <dbReference type="PDB" id="3WKW"/>
    </source>
</evidence>
<evidence type="ECO:0007744" key="12">
    <source>
        <dbReference type="PDB" id="3WKX"/>
    </source>
</evidence>
<evidence type="ECO:0007744" key="13">
    <source>
        <dbReference type="PDB" id="3WRE"/>
    </source>
</evidence>
<evidence type="ECO:0007744" key="14">
    <source>
        <dbReference type="PDB" id="3WRF"/>
    </source>
</evidence>
<evidence type="ECO:0007744" key="15">
    <source>
        <dbReference type="PDB" id="3WRG"/>
    </source>
</evidence>
<evidence type="ECO:0007829" key="16">
    <source>
        <dbReference type="PDB" id="3WRE"/>
    </source>
</evidence>
<evidence type="ECO:0007829" key="17">
    <source>
        <dbReference type="PDB" id="3WRF"/>
    </source>
</evidence>
<evidence type="ECO:0007829" key="18">
    <source>
        <dbReference type="PDB" id="3WRG"/>
    </source>
</evidence>
<evidence type="ECO:0007829" key="19">
    <source>
        <dbReference type="PDB" id="7DIF"/>
    </source>
</evidence>
<evidence type="ECO:0007829" key="20">
    <source>
        <dbReference type="PDB" id="7EXW"/>
    </source>
</evidence>
<sequence>MNVTITSPFWKRRRDQIVESVIPYQWGVMNDEIDTTVPDDPAGNQLADSKSHAVANLKVAAGELDDEFHGMVFQDSDVYKWLEEAAYALAYHPDPELKALCDRTVDLIARAQQSDGYLDTPYQIKSGVWADRPRFSLIQQSHEMYVMGHYIEAAVAYHQVTGNEQALEVAKKMADCLDANFGPEEGKIHGADGHPEIELALAKLYEETGEKRYLTLSQYLIDVRGQDPQFYAKQLKAMNGDNIFHDLGFYKPTYFQAAEPVRDQQTADGHAVRVGYLCTGVAHVGRLLGDQGLIDTAKRFWKNIVTRRMYVTGAIGSTHVGESFTYDYDLPNDTMYGETCASVAMSMFAQQMLDLEPKGEYADVLEKELFNGSIAGISLDGKQYYYVNALETTPDGLDNPDRHHVLSHRVDWFGCACCPANIARLIASVDRYIYTERDGGKTVLSHQFIANTAEFASGLTVEQRSNFPWDGHVEYTVSLPASATDSSVRFGLRIPGWSRGSYTLTVNGKPAVGSLEDGFVYLVVNAGDTLEIALELDMSVKFVRANSRVRSDAGQVAVMRGPLVYCAEQVDNPGDLWNYRLADGVTGADAAVAFQADLLGGVDTVDLPAVREHADEDDAPLYVDADEPRAGEPATLRLVPYYSWANREIGEMRVFQRR</sequence>
<proteinExistence type="evidence at protein level"/>
<protein>
    <recommendedName>
        <fullName evidence="6">Non-reducing end beta-L-arabinofuranosidase</fullName>
        <ecNumber evidence="1">3.2.1.185</ecNumber>
    </recommendedName>
    <alternativeName>
        <fullName evidence="4">Beta-L-arabinofuranosidase</fullName>
        <shortName evidence="5">Beta-AFase</shortName>
    </alternativeName>
</protein>
<reference key="1">
    <citation type="journal article" date="2014" name="J. Biol. Chem.">
        <title>Characterization of a novel beta-L-arabinofuranosidase in Bifidobacterium longum: functional elucidation of a DUF1680 protein family member.</title>
        <authorList>
            <person name="Fujita K."/>
            <person name="Takashi Y."/>
            <person name="Obuchi E."/>
            <person name="Kitahara K."/>
            <person name="Suganuma T."/>
        </authorList>
    </citation>
    <scope>NUCLEOTIDE SEQUENCE [GENOMIC DNA]</scope>
    <scope>FUNCTION</scope>
    <scope>CATALYTIC ACTIVITY</scope>
    <scope>BIOPHYSICOCHEMICAL PROPERTIES</scope>
    <scope>MUTAGENESIS OF GLU-322; GLU-338 AND GLU-366</scope>
    <source>
        <strain>ATCC 15707 / DSM 20219 / CCUG 28903 / JCM 1217 / NCIMB 702259 / NCTC 11818 / E194b</strain>
    </source>
</reference>
<reference key="2">
    <citation type="journal article" date="2011" name="Nature">
        <title>Bifidobacteria can protect from enteropathogenic infection through production of acetate.</title>
        <authorList>
            <person name="Fukuda S."/>
            <person name="Toh H."/>
            <person name="Hase K."/>
            <person name="Oshima K."/>
            <person name="Nakanishi Y."/>
            <person name="Yoshimura K."/>
            <person name="Tobe T."/>
            <person name="Clarke J.M."/>
            <person name="Topping D.L."/>
            <person name="Suzuki T."/>
            <person name="Taylor T.D."/>
            <person name="Itoh K."/>
            <person name="Kikuchi J."/>
            <person name="Morita H."/>
            <person name="Hattori M."/>
            <person name="Ohno H."/>
        </authorList>
    </citation>
    <scope>NUCLEOTIDE SEQUENCE [LARGE SCALE GENOMIC DNA]</scope>
    <source>
        <strain>ATCC 15707 / DSM 20219 / CCUG 28903 / JCM 1217 / NCIMB 702259 / NCTC 11818 / E194b</strain>
    </source>
</reference>
<reference key="3">
    <citation type="journal article" date="2011" name="J. Biol. Chem.">
        <title>Characterization of a novel beta-L-Arabinofuranosidase in Bifidobacterium longum: functional elucidation of A DUF1680 family member.</title>
        <authorList>
            <person name="Fujita K."/>
            <person name="Takashi Y."/>
            <person name="Obuchi E."/>
            <person name="Kitahara K."/>
            <person name="Suganuma T."/>
        </authorList>
    </citation>
    <scope>RETRACTED PAPER</scope>
    <source>
        <strain>ATCC 15707 / DSM 20219 / CCUG 28903 / JCM 1217 / NCIMB 702259 / NCTC 11818 / E194b</strain>
    </source>
</reference>
<reference key="4">
    <citation type="journal article" date="2013" name="J. Biol. Chem.">
        <authorList>
            <person name="Fujita K."/>
            <person name="Takashi Y."/>
            <person name="Obuchi E."/>
            <person name="Kitahara K."/>
            <person name="Suganuma T."/>
        </authorList>
    </citation>
    <scope>RETRACTION NOTICE OF PUBMED:21914802</scope>
</reference>
<reference key="5">
    <citation type="journal article" date="2014" name="Acta Crystallogr. F Struct. Biol. Commun.">
        <title>Crystallization and preliminary X-ray diffraction analysis of a novel beta-L-arabinofuranosidase (HypBA1) from Bifidobacterium longum.</title>
        <authorList>
            <person name="Zhu Z."/>
            <person name="He M."/>
            <person name="Huang C.H."/>
            <person name="Ko T.P."/>
            <person name="Zeng Y.F."/>
            <person name="Huang Y.N."/>
            <person name="Jia S."/>
            <person name="Lu F."/>
            <person name="Liu J.R."/>
            <person name="Guo R.T."/>
        </authorList>
    </citation>
    <scope>CRYSTALLIZATION</scope>
    <source>
        <strain>ATCC 15707 / DSM 20219 / CCUG 28903 / JCM 1217 / NCIMB 702259 / NCTC 11818 / E194b</strain>
    </source>
</reference>
<reference evidence="11 12" key="6">
    <citation type="journal article" date="2014" name="Biochem. Biophys. Res. Commun.">
        <title>Crystal structure of glycoside hydrolase family 127 beta-l-arabinofuranosidase from Bifidobacterium longum.</title>
        <authorList>
            <person name="Ito T."/>
            <person name="Saikawa K."/>
            <person name="Kim S."/>
            <person name="Fujita K."/>
            <person name="Ishiwata A."/>
            <person name="Kaeothip S."/>
            <person name="Arakawa T."/>
            <person name="Wakagi T."/>
            <person name="Beckham G.T."/>
            <person name="Ito Y."/>
            <person name="Fushinobu S."/>
        </authorList>
    </citation>
    <scope>X-RAY CRYSTALLOGRAPHY (2.00 ANGSTROMS) OF APOENZYME AND IN COMPLEX WITH ZINC AND BETA-L-ARABINOFURANOSE</scope>
    <scope>REACTION MECHANISM</scope>
    <scope>COFACTOR</scope>
    <scope>ACTIVITY REGULATION</scope>
    <scope>SUBUNIT</scope>
    <scope>ACTIVE SITE</scope>
    <scope>MUTAGENESIS OF GLU-322; GLU-338; CYS-340; CYS-415; CYS-417 AND CYS-418</scope>
    <source>
        <strain>ATCC 15707 / DSM 20219 / CCUG 28903 / JCM 1217 / NCIMB 702259 / NCTC 11818 / E194b</strain>
    </source>
</reference>
<reference evidence="13 14 15" key="7">
    <citation type="journal article" date="2014" name="J. Bioprocess. Biotech.">
        <title>Structure and catalytic mechanism of a glycoside hydrolase family-127 beta-L-arabinofuranosidase (HypBA1).</title>
        <authorList>
            <person name="Huang C.H."/>
            <person name="Zhu Z."/>
            <person name="Cheng Y.S."/>
            <person name="Chan H.C."/>
            <person name="Ko T.P."/>
            <person name="Chen C.C."/>
            <person name="Wang I."/>
            <person name="Ho M.R."/>
            <person name="Hsu S.T."/>
            <person name="Zeng Y.F."/>
            <person name="Huang Y.N."/>
            <person name="Liu J.R."/>
            <person name="Guo R.T."/>
        </authorList>
    </citation>
    <scope>X-RAY CRYSTALLOGRAPHY (2.23 ANGSTROMS) OF APOENZYME AND IN COMPLEXES WITH ZINC AND BETA-L-ARABINOFURANOSE</scope>
    <scope>REACTION MECHANISM</scope>
    <scope>COFACTOR</scope>
    <scope>SUBUNIT</scope>
    <scope>ACTIVE SITE</scope>
    <source>
        <strain>ATCC 15707 / DSM 20219 / CCUG 28903 / JCM 1217 / NCIMB 702259 / NCTC 11818 / E194b</strain>
    </source>
</reference>
<accession>E8MGH8</accession>
<accession>G1UHC6</accession>